<protein>
    <recommendedName>
        <fullName>Acyl carrier protein, mitochondrial</fullName>
        <shortName>ACP</shortName>
    </recommendedName>
    <alternativeName>
        <fullName>NADH-ubiquinone oxidoreductase subunit AB1</fullName>
    </alternativeName>
</protein>
<reference key="1">
    <citation type="journal article" date="2005" name="Nature">
        <title>The genome of the social amoeba Dictyostelium discoideum.</title>
        <authorList>
            <person name="Eichinger L."/>
            <person name="Pachebat J.A."/>
            <person name="Gloeckner G."/>
            <person name="Rajandream M.A."/>
            <person name="Sucgang R."/>
            <person name="Berriman M."/>
            <person name="Song J."/>
            <person name="Olsen R."/>
            <person name="Szafranski K."/>
            <person name="Xu Q."/>
            <person name="Tunggal B."/>
            <person name="Kummerfeld S."/>
            <person name="Madera M."/>
            <person name="Konfortov B.A."/>
            <person name="Rivero F."/>
            <person name="Bankier A.T."/>
            <person name="Lehmann R."/>
            <person name="Hamlin N."/>
            <person name="Davies R."/>
            <person name="Gaudet P."/>
            <person name="Fey P."/>
            <person name="Pilcher K."/>
            <person name="Chen G."/>
            <person name="Saunders D."/>
            <person name="Sodergren E.J."/>
            <person name="Davis P."/>
            <person name="Kerhornou A."/>
            <person name="Nie X."/>
            <person name="Hall N."/>
            <person name="Anjard C."/>
            <person name="Hemphill L."/>
            <person name="Bason N."/>
            <person name="Farbrother P."/>
            <person name="Desany B."/>
            <person name="Just E."/>
            <person name="Morio T."/>
            <person name="Rost R."/>
            <person name="Churcher C.M."/>
            <person name="Cooper J."/>
            <person name="Haydock S."/>
            <person name="van Driessche N."/>
            <person name="Cronin A."/>
            <person name="Goodhead I."/>
            <person name="Muzny D.M."/>
            <person name="Mourier T."/>
            <person name="Pain A."/>
            <person name="Lu M."/>
            <person name="Harper D."/>
            <person name="Lindsay R."/>
            <person name="Hauser H."/>
            <person name="James K.D."/>
            <person name="Quiles M."/>
            <person name="Madan Babu M."/>
            <person name="Saito T."/>
            <person name="Buchrieser C."/>
            <person name="Wardroper A."/>
            <person name="Felder M."/>
            <person name="Thangavelu M."/>
            <person name="Johnson D."/>
            <person name="Knights A."/>
            <person name="Loulseged H."/>
            <person name="Mungall K.L."/>
            <person name="Oliver K."/>
            <person name="Price C."/>
            <person name="Quail M.A."/>
            <person name="Urushihara H."/>
            <person name="Hernandez J."/>
            <person name="Rabbinowitsch E."/>
            <person name="Steffen D."/>
            <person name="Sanders M."/>
            <person name="Ma J."/>
            <person name="Kohara Y."/>
            <person name="Sharp S."/>
            <person name="Simmonds M.N."/>
            <person name="Spiegler S."/>
            <person name="Tivey A."/>
            <person name="Sugano S."/>
            <person name="White B."/>
            <person name="Walker D."/>
            <person name="Woodward J.R."/>
            <person name="Winckler T."/>
            <person name="Tanaka Y."/>
            <person name="Shaulsky G."/>
            <person name="Schleicher M."/>
            <person name="Weinstock G.M."/>
            <person name="Rosenthal A."/>
            <person name="Cox E.C."/>
            <person name="Chisholm R.L."/>
            <person name="Gibbs R.A."/>
            <person name="Loomis W.F."/>
            <person name="Platzer M."/>
            <person name="Kay R.R."/>
            <person name="Williams J.G."/>
            <person name="Dear P.H."/>
            <person name="Noegel A.A."/>
            <person name="Barrell B.G."/>
            <person name="Kuspa A."/>
        </authorList>
    </citation>
    <scope>NUCLEOTIDE SEQUENCE [LARGE SCALE GENOMIC DNA]</scope>
    <source>
        <strain>AX4</strain>
    </source>
</reference>
<organism>
    <name type="scientific">Dictyostelium discoideum</name>
    <name type="common">Social amoeba</name>
    <dbReference type="NCBI Taxonomy" id="44689"/>
    <lineage>
        <taxon>Eukaryota</taxon>
        <taxon>Amoebozoa</taxon>
        <taxon>Evosea</taxon>
        <taxon>Eumycetozoa</taxon>
        <taxon>Dictyostelia</taxon>
        <taxon>Dictyosteliales</taxon>
        <taxon>Dictyosteliaceae</taxon>
        <taxon>Dictyostelium</taxon>
    </lineage>
</organism>
<comment type="function">
    <text evidence="1">Carrier of the growing fatty acid chain in fatty acid biosynthesis. May be involved in the synthesis of very-long-chain fatty acids. Accessory and non-catalytic subunit of the mitochondrial membrane respiratory chain NADH dehydrogenase (Complex I), which functions in the transfer of electrons from NADH to the respiratory chain (By similarity).</text>
</comment>
<comment type="pathway">
    <text>Lipid metabolism; fatty acid biosynthesis.</text>
</comment>
<comment type="subunit">
    <text evidence="1">Complex I is composed of about 45 different subunits.</text>
</comment>
<comment type="subcellular location">
    <subcellularLocation>
        <location evidence="1">Mitochondrion</location>
    </subcellularLocation>
</comment>
<comment type="PTM">
    <text evidence="1">4'-phosphopantetheine is transferred from CoA to a specific serine of apo-ACP by acpS. This modification is essential for activity because fatty acids are bound in thioester linkage to the sulfhydryl of the prosthetic group (By similarity).</text>
</comment>
<comment type="similarity">
    <text evidence="4">Belongs to the acyl carrier protein (ACP) family.</text>
</comment>
<name>ACPM_DICDI</name>
<gene>
    <name type="primary">ndufab1</name>
    <name type="ORF">DDB_G0291866</name>
</gene>
<keyword id="KW-0249">Electron transport</keyword>
<keyword id="KW-0275">Fatty acid biosynthesis</keyword>
<keyword id="KW-0276">Fatty acid metabolism</keyword>
<keyword id="KW-0444">Lipid biosynthesis</keyword>
<keyword id="KW-0443">Lipid metabolism</keyword>
<keyword id="KW-0496">Mitochondrion</keyword>
<keyword id="KW-0596">Phosphopantetheine</keyword>
<keyword id="KW-0597">Phosphoprotein</keyword>
<keyword id="KW-1185">Reference proteome</keyword>
<keyword id="KW-0679">Respiratory chain</keyword>
<keyword id="KW-0809">Transit peptide</keyword>
<keyword id="KW-0813">Transport</keyword>
<accession>Q54E22</accession>
<evidence type="ECO:0000250" key="1"/>
<evidence type="ECO:0000255" key="2"/>
<evidence type="ECO:0000255" key="3">
    <source>
        <dbReference type="PROSITE-ProRule" id="PRU00258"/>
    </source>
</evidence>
<evidence type="ECO:0000305" key="4"/>
<feature type="transit peptide" description="Mitochondrion" evidence="2">
    <location>
        <begin position="1"/>
        <end status="unknown"/>
    </location>
</feature>
<feature type="chain" id="PRO_0000328096" description="Acyl carrier protein, mitochondrial">
    <location>
        <begin status="unknown"/>
        <end position="120"/>
    </location>
</feature>
<feature type="domain" description="Carrier" evidence="3">
    <location>
        <begin position="43"/>
        <end position="117"/>
    </location>
</feature>
<feature type="modified residue" description="O-(pantetheine 4'-phosphoryl)serine" evidence="3">
    <location>
        <position position="77"/>
    </location>
</feature>
<sequence length="120" mass="13196">MIRNTFKLVSNIAVRPAFSSTFVRQPIVASSMMVRNYGSISEKEITDRVIGVVSQYDKVSGKTVTPTTTFKELGLDSLDSADILVAVEEEFGIEIPDEEADKITSCAETISYLRKTPTAK</sequence>
<proteinExistence type="inferred from homology"/>
<dbReference type="EMBL" id="AAFI02000186">
    <property type="protein sequence ID" value="EAL61463.1"/>
    <property type="molecule type" value="Genomic_DNA"/>
</dbReference>
<dbReference type="RefSeq" id="XP_629874.1">
    <property type="nucleotide sequence ID" value="XM_629872.1"/>
</dbReference>
<dbReference type="SMR" id="Q54E22"/>
<dbReference type="FunCoup" id="Q54E22">
    <property type="interactions" value="184"/>
</dbReference>
<dbReference type="STRING" id="44689.Q54E22"/>
<dbReference type="PaxDb" id="44689-DDB0238774"/>
<dbReference type="EnsemblProtists" id="EAL61463">
    <property type="protein sequence ID" value="EAL61463"/>
    <property type="gene ID" value="DDB_G0291866"/>
</dbReference>
<dbReference type="GeneID" id="8628372"/>
<dbReference type="KEGG" id="ddi:DDB_G0291866"/>
<dbReference type="dictyBase" id="DDB_G0291866">
    <property type="gene designation" value="ndufab1"/>
</dbReference>
<dbReference type="VEuPathDB" id="AmoebaDB:DDB_G0291866"/>
<dbReference type="eggNOG" id="KOG1748">
    <property type="taxonomic scope" value="Eukaryota"/>
</dbReference>
<dbReference type="HOGENOM" id="CLU_108696_0_0_1"/>
<dbReference type="InParanoid" id="Q54E22"/>
<dbReference type="OMA" id="KITSCAE"/>
<dbReference type="PhylomeDB" id="Q54E22"/>
<dbReference type="Reactome" id="R-DDI-77289">
    <property type="pathway name" value="Mitochondrial Fatty Acid Beta-Oxidation"/>
</dbReference>
<dbReference type="Reactome" id="R-DDI-9857492">
    <property type="pathway name" value="Protein lipoylation"/>
</dbReference>
<dbReference type="UniPathway" id="UPA00094"/>
<dbReference type="PRO" id="PR:Q54E22"/>
<dbReference type="Proteomes" id="UP000002195">
    <property type="component" value="Chromosome 6"/>
</dbReference>
<dbReference type="GO" id="GO:0005739">
    <property type="term" value="C:mitochondrion"/>
    <property type="evidence" value="ECO:0000318"/>
    <property type="project" value="GO_Central"/>
</dbReference>
<dbReference type="GO" id="GO:0000035">
    <property type="term" value="F:acyl binding"/>
    <property type="evidence" value="ECO:0000318"/>
    <property type="project" value="GO_Central"/>
</dbReference>
<dbReference type="GO" id="GO:0000036">
    <property type="term" value="F:acyl carrier activity"/>
    <property type="evidence" value="ECO:0000318"/>
    <property type="project" value="GO_Central"/>
</dbReference>
<dbReference type="FunFam" id="1.10.1200.10:FF:000003">
    <property type="entry name" value="Acyl carrier protein"/>
    <property type="match status" value="1"/>
</dbReference>
<dbReference type="Gene3D" id="1.10.1200.10">
    <property type="entry name" value="ACP-like"/>
    <property type="match status" value="1"/>
</dbReference>
<dbReference type="HAMAP" id="MF_01217">
    <property type="entry name" value="Acyl_carrier"/>
    <property type="match status" value="1"/>
</dbReference>
<dbReference type="InterPro" id="IPR003231">
    <property type="entry name" value="ACP"/>
</dbReference>
<dbReference type="InterPro" id="IPR036736">
    <property type="entry name" value="ACP-like_sf"/>
</dbReference>
<dbReference type="InterPro" id="IPR009081">
    <property type="entry name" value="PP-bd_ACP"/>
</dbReference>
<dbReference type="InterPro" id="IPR006162">
    <property type="entry name" value="Ppantetheine_attach_site"/>
</dbReference>
<dbReference type="PANTHER" id="PTHR20863">
    <property type="entry name" value="ACYL CARRIER PROTEIN"/>
    <property type="match status" value="1"/>
</dbReference>
<dbReference type="PANTHER" id="PTHR20863:SF28">
    <property type="entry name" value="ACYL CARRIER PROTEIN, MITOCHONDRIAL"/>
    <property type="match status" value="1"/>
</dbReference>
<dbReference type="Pfam" id="PF00550">
    <property type="entry name" value="PP-binding"/>
    <property type="match status" value="1"/>
</dbReference>
<dbReference type="SUPFAM" id="SSF47336">
    <property type="entry name" value="ACP-like"/>
    <property type="match status" value="1"/>
</dbReference>
<dbReference type="PROSITE" id="PS50075">
    <property type="entry name" value="CARRIER"/>
    <property type="match status" value="1"/>
</dbReference>
<dbReference type="PROSITE" id="PS00012">
    <property type="entry name" value="PHOSPHOPANTETHEINE"/>
    <property type="match status" value="1"/>
</dbReference>